<accession>Q21FP9</accession>
<proteinExistence type="inferred from homology"/>
<gene>
    <name evidence="1" type="primary">hisE</name>
    <name type="ordered locus">Sde_3223</name>
</gene>
<organism>
    <name type="scientific">Saccharophagus degradans (strain 2-40 / ATCC 43961 / DSM 17024)</name>
    <dbReference type="NCBI Taxonomy" id="203122"/>
    <lineage>
        <taxon>Bacteria</taxon>
        <taxon>Pseudomonadati</taxon>
        <taxon>Pseudomonadota</taxon>
        <taxon>Gammaproteobacteria</taxon>
        <taxon>Cellvibrionales</taxon>
        <taxon>Cellvibrionaceae</taxon>
        <taxon>Saccharophagus</taxon>
    </lineage>
</organism>
<sequence length="115" mass="12437">MTSTLDVSKVLGLLDQVLAERKASGDPEASYVAQLHHKGLNKILEKVGEEATETILAAKDAERSGNTDLLVCETADLLFHAMVMLSHLGSNTDAVMAELARRFDLSGLEEKASRK</sequence>
<evidence type="ECO:0000255" key="1">
    <source>
        <dbReference type="HAMAP-Rule" id="MF_01020"/>
    </source>
</evidence>
<keyword id="KW-0028">Amino-acid biosynthesis</keyword>
<keyword id="KW-0067">ATP-binding</keyword>
<keyword id="KW-0963">Cytoplasm</keyword>
<keyword id="KW-0368">Histidine biosynthesis</keyword>
<keyword id="KW-0378">Hydrolase</keyword>
<keyword id="KW-0547">Nucleotide-binding</keyword>
<keyword id="KW-1185">Reference proteome</keyword>
<dbReference type="EC" id="3.6.1.31" evidence="1"/>
<dbReference type="EMBL" id="CP000282">
    <property type="protein sequence ID" value="ABD82480.1"/>
    <property type="molecule type" value="Genomic_DNA"/>
</dbReference>
<dbReference type="RefSeq" id="WP_011469696.1">
    <property type="nucleotide sequence ID" value="NC_007912.1"/>
</dbReference>
<dbReference type="SMR" id="Q21FP9"/>
<dbReference type="STRING" id="203122.Sde_3223"/>
<dbReference type="GeneID" id="98614848"/>
<dbReference type="KEGG" id="sde:Sde_3223"/>
<dbReference type="eggNOG" id="COG0140">
    <property type="taxonomic scope" value="Bacteria"/>
</dbReference>
<dbReference type="HOGENOM" id="CLU_123337_1_2_6"/>
<dbReference type="OrthoDB" id="9795769at2"/>
<dbReference type="UniPathway" id="UPA00031">
    <property type="reaction ID" value="UER00007"/>
</dbReference>
<dbReference type="Proteomes" id="UP000001947">
    <property type="component" value="Chromosome"/>
</dbReference>
<dbReference type="GO" id="GO:0005737">
    <property type="term" value="C:cytoplasm"/>
    <property type="evidence" value="ECO:0007669"/>
    <property type="project" value="UniProtKB-SubCell"/>
</dbReference>
<dbReference type="GO" id="GO:0005524">
    <property type="term" value="F:ATP binding"/>
    <property type="evidence" value="ECO:0007669"/>
    <property type="project" value="UniProtKB-KW"/>
</dbReference>
<dbReference type="GO" id="GO:0004636">
    <property type="term" value="F:phosphoribosyl-ATP diphosphatase activity"/>
    <property type="evidence" value="ECO:0007669"/>
    <property type="project" value="UniProtKB-UniRule"/>
</dbReference>
<dbReference type="GO" id="GO:0000105">
    <property type="term" value="P:L-histidine biosynthetic process"/>
    <property type="evidence" value="ECO:0007669"/>
    <property type="project" value="UniProtKB-UniRule"/>
</dbReference>
<dbReference type="CDD" id="cd11534">
    <property type="entry name" value="NTP-PPase_HisIE_like"/>
    <property type="match status" value="1"/>
</dbReference>
<dbReference type="Gene3D" id="1.10.287.1080">
    <property type="entry name" value="MazG-like"/>
    <property type="match status" value="1"/>
</dbReference>
<dbReference type="HAMAP" id="MF_01020">
    <property type="entry name" value="HisE"/>
    <property type="match status" value="1"/>
</dbReference>
<dbReference type="InterPro" id="IPR008179">
    <property type="entry name" value="HisE"/>
</dbReference>
<dbReference type="InterPro" id="IPR021130">
    <property type="entry name" value="PRib-ATP_PPHydrolase-like"/>
</dbReference>
<dbReference type="NCBIfam" id="TIGR03188">
    <property type="entry name" value="histidine_hisI"/>
    <property type="match status" value="1"/>
</dbReference>
<dbReference type="NCBIfam" id="NF001611">
    <property type="entry name" value="PRK00400.1-3"/>
    <property type="match status" value="1"/>
</dbReference>
<dbReference type="PANTHER" id="PTHR42945">
    <property type="entry name" value="HISTIDINE BIOSYNTHESIS BIFUNCTIONAL PROTEIN"/>
    <property type="match status" value="1"/>
</dbReference>
<dbReference type="PANTHER" id="PTHR42945:SF9">
    <property type="entry name" value="HISTIDINE BIOSYNTHESIS BIFUNCTIONAL PROTEIN HISIE"/>
    <property type="match status" value="1"/>
</dbReference>
<dbReference type="Pfam" id="PF01503">
    <property type="entry name" value="PRA-PH"/>
    <property type="match status" value="1"/>
</dbReference>
<dbReference type="SUPFAM" id="SSF101386">
    <property type="entry name" value="all-alpha NTP pyrophosphatases"/>
    <property type="match status" value="1"/>
</dbReference>
<reference key="1">
    <citation type="journal article" date="2008" name="PLoS Genet.">
        <title>Complete genome sequence of the complex carbohydrate-degrading marine bacterium, Saccharophagus degradans strain 2-40 T.</title>
        <authorList>
            <person name="Weiner R.M."/>
            <person name="Taylor L.E. II"/>
            <person name="Henrissat B."/>
            <person name="Hauser L."/>
            <person name="Land M."/>
            <person name="Coutinho P.M."/>
            <person name="Rancurel C."/>
            <person name="Saunders E.H."/>
            <person name="Longmire A.G."/>
            <person name="Zhang H."/>
            <person name="Bayer E.A."/>
            <person name="Gilbert H.J."/>
            <person name="Larimer F."/>
            <person name="Zhulin I.B."/>
            <person name="Ekborg N.A."/>
            <person name="Lamed R."/>
            <person name="Richardson P.M."/>
            <person name="Borovok I."/>
            <person name="Hutcheson S."/>
        </authorList>
    </citation>
    <scope>NUCLEOTIDE SEQUENCE [LARGE SCALE GENOMIC DNA]</scope>
    <source>
        <strain>2-40 / ATCC 43961 / DSM 17024</strain>
    </source>
</reference>
<name>HIS2_SACD2</name>
<protein>
    <recommendedName>
        <fullName evidence="1">Phosphoribosyl-ATP pyrophosphatase</fullName>
        <shortName evidence="1">PRA-PH</shortName>
        <ecNumber evidence="1">3.6.1.31</ecNumber>
    </recommendedName>
</protein>
<feature type="chain" id="PRO_0000319663" description="Phosphoribosyl-ATP pyrophosphatase">
    <location>
        <begin position="1"/>
        <end position="115"/>
    </location>
</feature>
<comment type="catalytic activity">
    <reaction evidence="1">
        <text>1-(5-phospho-beta-D-ribosyl)-ATP + H2O = 1-(5-phospho-beta-D-ribosyl)-5'-AMP + diphosphate + H(+)</text>
        <dbReference type="Rhea" id="RHEA:22828"/>
        <dbReference type="ChEBI" id="CHEBI:15377"/>
        <dbReference type="ChEBI" id="CHEBI:15378"/>
        <dbReference type="ChEBI" id="CHEBI:33019"/>
        <dbReference type="ChEBI" id="CHEBI:59457"/>
        <dbReference type="ChEBI" id="CHEBI:73183"/>
        <dbReference type="EC" id="3.6.1.31"/>
    </reaction>
</comment>
<comment type="pathway">
    <text evidence="1">Amino-acid biosynthesis; L-histidine biosynthesis; L-histidine from 5-phospho-alpha-D-ribose 1-diphosphate: step 2/9.</text>
</comment>
<comment type="subcellular location">
    <subcellularLocation>
        <location evidence="1">Cytoplasm</location>
    </subcellularLocation>
</comment>
<comment type="similarity">
    <text evidence="1">Belongs to the PRA-PH family.</text>
</comment>